<evidence type="ECO:0000250" key="1">
    <source>
        <dbReference type="UniProtKB" id="Q9UKA2"/>
    </source>
</evidence>
<evidence type="ECO:0000255" key="2">
    <source>
        <dbReference type="PROSITE-ProRule" id="PRU00080"/>
    </source>
</evidence>
<evidence type="ECO:0000269" key="3">
    <source>
    </source>
</evidence>
<evidence type="ECO:0000269" key="4">
    <source>
    </source>
</evidence>
<evidence type="ECO:0007744" key="5">
    <source>
    </source>
</evidence>
<protein>
    <recommendedName>
        <fullName>F-box/LRR-repeat protein 4</fullName>
    </recommendedName>
    <alternativeName>
        <fullName>F-box and leucine-rich repeat protein 4</fullName>
    </alternativeName>
</protein>
<name>FBXL4_MOUSE</name>
<dbReference type="EMBL" id="AK032391">
    <property type="protein sequence ID" value="BAC27850.1"/>
    <property type="molecule type" value="mRNA"/>
</dbReference>
<dbReference type="EMBL" id="AK051429">
    <property type="protein sequence ID" value="BAC34636.1"/>
    <property type="molecule type" value="mRNA"/>
</dbReference>
<dbReference type="EMBL" id="AL683854">
    <property type="status" value="NOT_ANNOTATED_CDS"/>
    <property type="molecule type" value="Genomic_DNA"/>
</dbReference>
<dbReference type="EMBL" id="AL772230">
    <property type="status" value="NOT_ANNOTATED_CDS"/>
    <property type="molecule type" value="Genomic_DNA"/>
</dbReference>
<dbReference type="CCDS" id="CCDS18004.1"/>
<dbReference type="RefSeq" id="NP_001411973.1">
    <property type="nucleotide sequence ID" value="NM_001425044.1"/>
</dbReference>
<dbReference type="RefSeq" id="NP_001411974.1">
    <property type="nucleotide sequence ID" value="NM_001425045.1"/>
</dbReference>
<dbReference type="RefSeq" id="NP_766576.1">
    <property type="nucleotide sequence ID" value="NM_172988.5"/>
</dbReference>
<dbReference type="RefSeq" id="XP_006538016.1">
    <property type="nucleotide sequence ID" value="XM_006537953.2"/>
</dbReference>
<dbReference type="SMR" id="Q8BH70"/>
<dbReference type="BioGRID" id="234659">
    <property type="interactions" value="1"/>
</dbReference>
<dbReference type="FunCoup" id="Q8BH70">
    <property type="interactions" value="426"/>
</dbReference>
<dbReference type="STRING" id="10090.ENSMUSP00000042219"/>
<dbReference type="iPTMnet" id="Q8BH70"/>
<dbReference type="PhosphoSitePlus" id="Q8BH70"/>
<dbReference type="PaxDb" id="10090-ENSMUSP00000042219"/>
<dbReference type="ProteomicsDB" id="267356"/>
<dbReference type="Pumba" id="Q8BH70"/>
<dbReference type="Antibodypedia" id="18894">
    <property type="antibodies" value="105 antibodies from 19 providers"/>
</dbReference>
<dbReference type="DNASU" id="269514"/>
<dbReference type="Ensembl" id="ENSMUST00000039234.10">
    <property type="protein sequence ID" value="ENSMUSP00000042219.4"/>
    <property type="gene ID" value="ENSMUSG00000040410.15"/>
</dbReference>
<dbReference type="GeneID" id="269514"/>
<dbReference type="KEGG" id="mmu:269514"/>
<dbReference type="UCSC" id="uc008sdo.2">
    <property type="organism name" value="mouse"/>
</dbReference>
<dbReference type="AGR" id="MGI:2140367"/>
<dbReference type="CTD" id="26235"/>
<dbReference type="MGI" id="MGI:2140367">
    <property type="gene designation" value="Fbxl4"/>
</dbReference>
<dbReference type="VEuPathDB" id="HostDB:ENSMUSG00000040410"/>
<dbReference type="eggNOG" id="KOG1947">
    <property type="taxonomic scope" value="Eukaryota"/>
</dbReference>
<dbReference type="GeneTree" id="ENSGT00940000155184"/>
<dbReference type="HOGENOM" id="CLU_024764_2_0_1"/>
<dbReference type="InParanoid" id="Q8BH70"/>
<dbReference type="OMA" id="GWCMREA"/>
<dbReference type="OrthoDB" id="2153609at2759"/>
<dbReference type="PhylomeDB" id="Q8BH70"/>
<dbReference type="TreeFam" id="TF323721"/>
<dbReference type="Reactome" id="R-MMU-8951664">
    <property type="pathway name" value="Neddylation"/>
</dbReference>
<dbReference type="Reactome" id="R-MMU-983168">
    <property type="pathway name" value="Antigen processing: Ubiquitination &amp; Proteasome degradation"/>
</dbReference>
<dbReference type="BioGRID-ORCS" id="269514">
    <property type="hits" value="5 hits in 78 CRISPR screens"/>
</dbReference>
<dbReference type="ChiTaRS" id="Fbxl4">
    <property type="organism name" value="mouse"/>
</dbReference>
<dbReference type="PRO" id="PR:Q8BH70"/>
<dbReference type="Proteomes" id="UP000000589">
    <property type="component" value="Chromosome 4"/>
</dbReference>
<dbReference type="RNAct" id="Q8BH70">
    <property type="molecule type" value="protein"/>
</dbReference>
<dbReference type="Bgee" id="ENSMUSG00000040410">
    <property type="expression patterns" value="Expressed in superior cervical ganglion and 220 other cell types or tissues"/>
</dbReference>
<dbReference type="ExpressionAtlas" id="Q8BH70">
    <property type="expression patterns" value="baseline and differential"/>
</dbReference>
<dbReference type="GO" id="GO:0005758">
    <property type="term" value="C:mitochondrial intermembrane space"/>
    <property type="evidence" value="ECO:0000250"/>
    <property type="project" value="UniProtKB"/>
</dbReference>
<dbReference type="GO" id="GO:0005741">
    <property type="term" value="C:mitochondrial outer membrane"/>
    <property type="evidence" value="ECO:0007669"/>
    <property type="project" value="UniProtKB-SubCell"/>
</dbReference>
<dbReference type="GO" id="GO:0016607">
    <property type="term" value="C:nuclear speck"/>
    <property type="evidence" value="ECO:0007669"/>
    <property type="project" value="Ensembl"/>
</dbReference>
<dbReference type="GO" id="GO:1990756">
    <property type="term" value="F:ubiquitin-like ligase-substrate adaptor activity"/>
    <property type="evidence" value="ECO:0007669"/>
    <property type="project" value="Ensembl"/>
</dbReference>
<dbReference type="GO" id="GO:0000422">
    <property type="term" value="P:autophagy of mitochondrion"/>
    <property type="evidence" value="ECO:0000315"/>
    <property type="project" value="MGI"/>
</dbReference>
<dbReference type="GO" id="GO:1901525">
    <property type="term" value="P:negative regulation of mitophagy"/>
    <property type="evidence" value="ECO:0007669"/>
    <property type="project" value="Ensembl"/>
</dbReference>
<dbReference type="CDD" id="cd22117">
    <property type="entry name" value="F-box_FBXL4"/>
    <property type="match status" value="1"/>
</dbReference>
<dbReference type="FunFam" id="1.20.1280.50:FF:000050">
    <property type="entry name" value="F-box and leucine-rich repeat protein 4"/>
    <property type="match status" value="1"/>
</dbReference>
<dbReference type="FunFam" id="3.80.10.10:FF:000152">
    <property type="entry name" value="F-box/LRR-repeat protein 4 isoform X1"/>
    <property type="match status" value="1"/>
</dbReference>
<dbReference type="FunFam" id="3.80.10.10:FF:000417">
    <property type="entry name" value="F-box/LRR-repeat protein 4 isoform X1"/>
    <property type="match status" value="1"/>
</dbReference>
<dbReference type="Gene3D" id="1.20.1280.50">
    <property type="match status" value="1"/>
</dbReference>
<dbReference type="Gene3D" id="3.80.10.10">
    <property type="entry name" value="Ribonuclease Inhibitor"/>
    <property type="match status" value="1"/>
</dbReference>
<dbReference type="InterPro" id="IPR036047">
    <property type="entry name" value="F-box-like_dom_sf"/>
</dbReference>
<dbReference type="InterPro" id="IPR001810">
    <property type="entry name" value="F-box_dom"/>
</dbReference>
<dbReference type="InterPro" id="IPR006553">
    <property type="entry name" value="Leu-rich_rpt_Cys-con_subtyp"/>
</dbReference>
<dbReference type="InterPro" id="IPR032675">
    <property type="entry name" value="LRR_dom_sf"/>
</dbReference>
<dbReference type="PANTHER" id="PTHR13318:SF152">
    <property type="entry name" value="F-BOX_LRR-REPEAT PROTEIN 4"/>
    <property type="match status" value="1"/>
</dbReference>
<dbReference type="PANTHER" id="PTHR13318">
    <property type="entry name" value="PARTNER OF PAIRED, ISOFORM B-RELATED"/>
    <property type="match status" value="1"/>
</dbReference>
<dbReference type="Pfam" id="PF12937">
    <property type="entry name" value="F-box-like"/>
    <property type="match status" value="1"/>
</dbReference>
<dbReference type="SMART" id="SM00256">
    <property type="entry name" value="FBOX"/>
    <property type="match status" value="1"/>
</dbReference>
<dbReference type="SMART" id="SM00367">
    <property type="entry name" value="LRR_CC"/>
    <property type="match status" value="7"/>
</dbReference>
<dbReference type="SUPFAM" id="SSF81383">
    <property type="entry name" value="F-box domain"/>
    <property type="match status" value="1"/>
</dbReference>
<dbReference type="SUPFAM" id="SSF52047">
    <property type="entry name" value="RNI-like"/>
    <property type="match status" value="1"/>
</dbReference>
<dbReference type="PROSITE" id="PS50181">
    <property type="entry name" value="FBOX"/>
    <property type="match status" value="1"/>
</dbReference>
<proteinExistence type="evidence at protein level"/>
<comment type="function">
    <text evidence="3 4">Substrate-recognition component of the mitochondria-localized SCF-FBXL4 ubiquitin E3 ligase complex that plays a role in the restriction of mitophagy by controlling the degradation of BNIP3 and NIX mitophagy receptors (PubMed:36896912). Also rescues mitochondrial injury through reverting hyperactivation of DRP1-mediated mitochondrial fission (PubMed:38359748).</text>
</comment>
<comment type="subunit">
    <text evidence="1">Part of a SCF (SKP1-CUL1-F-box) protein ligase complex. Interacts with FAF2 and VCP. Interacts with PPTC7; this interaction promotes destruction of BNIP3 and NIX and mitophagy suppression.</text>
</comment>
<comment type="subcellular location">
    <subcellularLocation>
        <location evidence="1">Cytoplasm</location>
    </subcellularLocation>
    <subcellularLocation>
        <location evidence="1">Nucleus</location>
    </subcellularLocation>
    <subcellularLocation>
        <location evidence="4">Mitochondrion outer membrane</location>
    </subcellularLocation>
</comment>
<comment type="disruption phenotype">
    <text evidence="3">Fbxl4 knockout mice exhibit loss of mitochondria and perinatal lethality due to excessive basal mitophagy.</text>
</comment>
<organism>
    <name type="scientific">Mus musculus</name>
    <name type="common">Mouse</name>
    <dbReference type="NCBI Taxonomy" id="10090"/>
    <lineage>
        <taxon>Eukaryota</taxon>
        <taxon>Metazoa</taxon>
        <taxon>Chordata</taxon>
        <taxon>Craniata</taxon>
        <taxon>Vertebrata</taxon>
        <taxon>Euteleostomi</taxon>
        <taxon>Mammalia</taxon>
        <taxon>Eutheria</taxon>
        <taxon>Euarchontoglires</taxon>
        <taxon>Glires</taxon>
        <taxon>Rodentia</taxon>
        <taxon>Myomorpha</taxon>
        <taxon>Muroidea</taxon>
        <taxon>Muridae</taxon>
        <taxon>Murinae</taxon>
        <taxon>Mus</taxon>
        <taxon>Mus</taxon>
    </lineage>
</organism>
<keyword id="KW-0963">Cytoplasm</keyword>
<keyword id="KW-0433">Leucine-rich repeat</keyword>
<keyword id="KW-0472">Membrane</keyword>
<keyword id="KW-0488">Methylation</keyword>
<keyword id="KW-0496">Mitochondrion</keyword>
<keyword id="KW-1000">Mitochondrion outer membrane</keyword>
<keyword id="KW-0539">Nucleus</keyword>
<keyword id="KW-1185">Reference proteome</keyword>
<keyword id="KW-0677">Repeat</keyword>
<keyword id="KW-0833">Ubl conjugation pathway</keyword>
<gene>
    <name type="primary">Fbxl4</name>
</gene>
<accession>Q8BH70</accession>
<sequence length="621" mass="70269">MSPVFPMLTVLTMFYYMCLRRRARTATRGDMMNSHRTIVSNSRTSPLNAEVVQYAKEVVDFSSHYGSENSMSYTMWNLAGVPNVFPSSGDFTQTAVFRTYGTWWDQCPSASLPFRRTPSSFQSQDYVELTFEQQVYPTAVHVLETYHPGAVIRILACSANPYSPNPPAEVRWEILWSERPMKVNASQARQFKPCIKQINFPTNLIRLEVNSSLLDYYTELDAVVLHGTKDKPLLSLKTALVDMNDLEDDDYEEKDGCEMDALNKKFSSAALGDGPHNGYFDKLPYELIQLILNHLSLPDLCRLAQTCRLLHQHCCDPLQYIHLNLQPYWARLDDTSLEFLQARCVLVQWLNLSWTGNRGFISVSGFSRFLKVCGSELVRLELSCSHFLNDTCLEVISEMCPNLQDLNLSSCDKLPPQAFGHIAKLCSLKRLVLYRTKVEQTALLSILNFCAELQHLSLGSCVMIEDYDVIASMIGAKCKNLRTLDLWRCKNITENGIAELASGCVLLEELDLGWCPTLQSSTGCFVRLARQLPNLQKLFLTANRSVCDTDIEELASNCTRLQQLDILGTRMVSPASLRKLLESCKDLSLLDVSFCSQIDNKAVLELNASFPKVFIKKSFTQ</sequence>
<feature type="chain" id="PRO_0000307719" description="F-box/LRR-repeat protein 4">
    <location>
        <begin position="1"/>
        <end position="621"/>
    </location>
</feature>
<feature type="domain" description="F-box" evidence="2">
    <location>
        <begin position="277"/>
        <end position="332"/>
    </location>
</feature>
<feature type="repeat" description="LRR 1">
    <location>
        <begin position="376"/>
        <end position="397"/>
    </location>
</feature>
<feature type="repeat" description="LRR 2">
    <location>
        <begin position="402"/>
        <end position="421"/>
    </location>
</feature>
<feature type="repeat" description="LRR 3">
    <location>
        <begin position="427"/>
        <end position="448"/>
    </location>
</feature>
<feature type="repeat" description="LRR 4">
    <location>
        <begin position="452"/>
        <end position="474"/>
    </location>
</feature>
<feature type="repeat" description="LRR 5">
    <location>
        <begin position="480"/>
        <end position="501"/>
    </location>
</feature>
<feature type="repeat" description="LRR 6">
    <location>
        <begin position="504"/>
        <end position="524"/>
    </location>
</feature>
<feature type="repeat" description="LRR 7">
    <location>
        <begin position="532"/>
        <end position="558"/>
    </location>
</feature>
<feature type="repeat" description="LRR 8">
    <location>
        <begin position="559"/>
        <end position="583"/>
    </location>
</feature>
<feature type="repeat" description="LRR 9">
    <location>
        <begin position="584"/>
        <end position="609"/>
    </location>
</feature>
<feature type="modified residue" description="Asymmetric dimethylarginine" evidence="5">
    <location>
        <position position="28"/>
    </location>
</feature>
<reference key="1">
    <citation type="journal article" date="2005" name="Science">
        <title>The transcriptional landscape of the mammalian genome.</title>
        <authorList>
            <person name="Carninci P."/>
            <person name="Kasukawa T."/>
            <person name="Katayama S."/>
            <person name="Gough J."/>
            <person name="Frith M.C."/>
            <person name="Maeda N."/>
            <person name="Oyama R."/>
            <person name="Ravasi T."/>
            <person name="Lenhard B."/>
            <person name="Wells C."/>
            <person name="Kodzius R."/>
            <person name="Shimokawa K."/>
            <person name="Bajic V.B."/>
            <person name="Brenner S.E."/>
            <person name="Batalov S."/>
            <person name="Forrest A.R."/>
            <person name="Zavolan M."/>
            <person name="Davis M.J."/>
            <person name="Wilming L.G."/>
            <person name="Aidinis V."/>
            <person name="Allen J.E."/>
            <person name="Ambesi-Impiombato A."/>
            <person name="Apweiler R."/>
            <person name="Aturaliya R.N."/>
            <person name="Bailey T.L."/>
            <person name="Bansal M."/>
            <person name="Baxter L."/>
            <person name="Beisel K.W."/>
            <person name="Bersano T."/>
            <person name="Bono H."/>
            <person name="Chalk A.M."/>
            <person name="Chiu K.P."/>
            <person name="Choudhary V."/>
            <person name="Christoffels A."/>
            <person name="Clutterbuck D.R."/>
            <person name="Crowe M.L."/>
            <person name="Dalla E."/>
            <person name="Dalrymple B.P."/>
            <person name="de Bono B."/>
            <person name="Della Gatta G."/>
            <person name="di Bernardo D."/>
            <person name="Down T."/>
            <person name="Engstrom P."/>
            <person name="Fagiolini M."/>
            <person name="Faulkner G."/>
            <person name="Fletcher C.F."/>
            <person name="Fukushima T."/>
            <person name="Furuno M."/>
            <person name="Futaki S."/>
            <person name="Gariboldi M."/>
            <person name="Georgii-Hemming P."/>
            <person name="Gingeras T.R."/>
            <person name="Gojobori T."/>
            <person name="Green R.E."/>
            <person name="Gustincich S."/>
            <person name="Harbers M."/>
            <person name="Hayashi Y."/>
            <person name="Hensch T.K."/>
            <person name="Hirokawa N."/>
            <person name="Hill D."/>
            <person name="Huminiecki L."/>
            <person name="Iacono M."/>
            <person name="Ikeo K."/>
            <person name="Iwama A."/>
            <person name="Ishikawa T."/>
            <person name="Jakt M."/>
            <person name="Kanapin A."/>
            <person name="Katoh M."/>
            <person name="Kawasawa Y."/>
            <person name="Kelso J."/>
            <person name="Kitamura H."/>
            <person name="Kitano H."/>
            <person name="Kollias G."/>
            <person name="Krishnan S.P."/>
            <person name="Kruger A."/>
            <person name="Kummerfeld S.K."/>
            <person name="Kurochkin I.V."/>
            <person name="Lareau L.F."/>
            <person name="Lazarevic D."/>
            <person name="Lipovich L."/>
            <person name="Liu J."/>
            <person name="Liuni S."/>
            <person name="McWilliam S."/>
            <person name="Madan Babu M."/>
            <person name="Madera M."/>
            <person name="Marchionni L."/>
            <person name="Matsuda H."/>
            <person name="Matsuzawa S."/>
            <person name="Miki H."/>
            <person name="Mignone F."/>
            <person name="Miyake S."/>
            <person name="Morris K."/>
            <person name="Mottagui-Tabar S."/>
            <person name="Mulder N."/>
            <person name="Nakano N."/>
            <person name="Nakauchi H."/>
            <person name="Ng P."/>
            <person name="Nilsson R."/>
            <person name="Nishiguchi S."/>
            <person name="Nishikawa S."/>
            <person name="Nori F."/>
            <person name="Ohara O."/>
            <person name="Okazaki Y."/>
            <person name="Orlando V."/>
            <person name="Pang K.C."/>
            <person name="Pavan W.J."/>
            <person name="Pavesi G."/>
            <person name="Pesole G."/>
            <person name="Petrovsky N."/>
            <person name="Piazza S."/>
            <person name="Reed J."/>
            <person name="Reid J.F."/>
            <person name="Ring B.Z."/>
            <person name="Ringwald M."/>
            <person name="Rost B."/>
            <person name="Ruan Y."/>
            <person name="Salzberg S.L."/>
            <person name="Sandelin A."/>
            <person name="Schneider C."/>
            <person name="Schoenbach C."/>
            <person name="Sekiguchi K."/>
            <person name="Semple C.A."/>
            <person name="Seno S."/>
            <person name="Sessa L."/>
            <person name="Sheng Y."/>
            <person name="Shibata Y."/>
            <person name="Shimada H."/>
            <person name="Shimada K."/>
            <person name="Silva D."/>
            <person name="Sinclair B."/>
            <person name="Sperling S."/>
            <person name="Stupka E."/>
            <person name="Sugiura K."/>
            <person name="Sultana R."/>
            <person name="Takenaka Y."/>
            <person name="Taki K."/>
            <person name="Tammoja K."/>
            <person name="Tan S.L."/>
            <person name="Tang S."/>
            <person name="Taylor M.S."/>
            <person name="Tegner J."/>
            <person name="Teichmann S.A."/>
            <person name="Ueda H.R."/>
            <person name="van Nimwegen E."/>
            <person name="Verardo R."/>
            <person name="Wei C.L."/>
            <person name="Yagi K."/>
            <person name="Yamanishi H."/>
            <person name="Zabarovsky E."/>
            <person name="Zhu S."/>
            <person name="Zimmer A."/>
            <person name="Hide W."/>
            <person name="Bult C."/>
            <person name="Grimmond S.M."/>
            <person name="Teasdale R.D."/>
            <person name="Liu E.T."/>
            <person name="Brusic V."/>
            <person name="Quackenbush J."/>
            <person name="Wahlestedt C."/>
            <person name="Mattick J.S."/>
            <person name="Hume D.A."/>
            <person name="Kai C."/>
            <person name="Sasaki D."/>
            <person name="Tomaru Y."/>
            <person name="Fukuda S."/>
            <person name="Kanamori-Katayama M."/>
            <person name="Suzuki M."/>
            <person name="Aoki J."/>
            <person name="Arakawa T."/>
            <person name="Iida J."/>
            <person name="Imamura K."/>
            <person name="Itoh M."/>
            <person name="Kato T."/>
            <person name="Kawaji H."/>
            <person name="Kawagashira N."/>
            <person name="Kawashima T."/>
            <person name="Kojima M."/>
            <person name="Kondo S."/>
            <person name="Konno H."/>
            <person name="Nakano K."/>
            <person name="Ninomiya N."/>
            <person name="Nishio T."/>
            <person name="Okada M."/>
            <person name="Plessy C."/>
            <person name="Shibata K."/>
            <person name="Shiraki T."/>
            <person name="Suzuki S."/>
            <person name="Tagami M."/>
            <person name="Waki K."/>
            <person name="Watahiki A."/>
            <person name="Okamura-Oho Y."/>
            <person name="Suzuki H."/>
            <person name="Kawai J."/>
            <person name="Hayashizaki Y."/>
        </authorList>
    </citation>
    <scope>NUCLEOTIDE SEQUENCE [LARGE SCALE MRNA]</scope>
    <source>
        <strain>C57BL/6J</strain>
        <tissue>Olfactory bulb</tissue>
        <tissue>Spinal ganglion</tissue>
    </source>
</reference>
<reference key="2">
    <citation type="journal article" date="2009" name="PLoS Biol.">
        <title>Lineage-specific biology revealed by a finished genome assembly of the mouse.</title>
        <authorList>
            <person name="Church D.M."/>
            <person name="Goodstadt L."/>
            <person name="Hillier L.W."/>
            <person name="Zody M.C."/>
            <person name="Goldstein S."/>
            <person name="She X."/>
            <person name="Bult C.J."/>
            <person name="Agarwala R."/>
            <person name="Cherry J.L."/>
            <person name="DiCuccio M."/>
            <person name="Hlavina W."/>
            <person name="Kapustin Y."/>
            <person name="Meric P."/>
            <person name="Maglott D."/>
            <person name="Birtle Z."/>
            <person name="Marques A.C."/>
            <person name="Graves T."/>
            <person name="Zhou S."/>
            <person name="Teague B."/>
            <person name="Potamousis K."/>
            <person name="Churas C."/>
            <person name="Place M."/>
            <person name="Herschleb J."/>
            <person name="Runnheim R."/>
            <person name="Forrest D."/>
            <person name="Amos-Landgraf J."/>
            <person name="Schwartz D.C."/>
            <person name="Cheng Z."/>
            <person name="Lindblad-Toh K."/>
            <person name="Eichler E.E."/>
            <person name="Ponting C.P."/>
        </authorList>
    </citation>
    <scope>NUCLEOTIDE SEQUENCE [LARGE SCALE GENOMIC DNA]</scope>
    <source>
        <strain>C57BL/6J</strain>
    </source>
</reference>
<reference key="3">
    <citation type="journal article" date="2010" name="Cell">
        <title>A tissue-specific atlas of mouse protein phosphorylation and expression.</title>
        <authorList>
            <person name="Huttlin E.L."/>
            <person name="Jedrychowski M.P."/>
            <person name="Elias J.E."/>
            <person name="Goswami T."/>
            <person name="Rad R."/>
            <person name="Beausoleil S.A."/>
            <person name="Villen J."/>
            <person name="Haas W."/>
            <person name="Sowa M.E."/>
            <person name="Gygi S.P."/>
        </authorList>
    </citation>
    <scope>IDENTIFICATION BY MASS SPECTROMETRY [LARGE SCALE ANALYSIS]</scope>
    <source>
        <tissue>Brain</tissue>
        <tissue>Kidney</tissue>
    </source>
</reference>
<reference key="4">
    <citation type="journal article" date="2014" name="Mol. Cell. Proteomics">
        <title>Immunoaffinity enrichment and mass spectrometry analysis of protein methylation.</title>
        <authorList>
            <person name="Guo A."/>
            <person name="Gu H."/>
            <person name="Zhou J."/>
            <person name="Mulhern D."/>
            <person name="Wang Y."/>
            <person name="Lee K.A."/>
            <person name="Yang V."/>
            <person name="Aguiar M."/>
            <person name="Kornhauser J."/>
            <person name="Jia X."/>
            <person name="Ren J."/>
            <person name="Beausoleil S.A."/>
            <person name="Silva J.C."/>
            <person name="Vemulapalli V."/>
            <person name="Bedford M.T."/>
            <person name="Comb M.J."/>
        </authorList>
    </citation>
    <scope>METHYLATION [LARGE SCALE ANALYSIS] AT ARG-28</scope>
    <scope>IDENTIFICATION BY MASS SPECTROMETRY [LARGE SCALE ANALYSIS]</scope>
    <source>
        <tissue>Embryo</tissue>
    </source>
</reference>
<reference key="5">
    <citation type="journal article" date="2023" name="EMBO J.">
        <title>A mitochondrial SCF-FBXL4 ubiquitin E3 ligase complex degrades BNIP3 and NIX to restrain mitophagy and prevent mitochondrial disease.</title>
        <authorList>
            <person name="Cao Y."/>
            <person name="Zheng J."/>
            <person name="Wan H."/>
            <person name="Sun Y."/>
            <person name="Fu S."/>
            <person name="Liu S."/>
            <person name="He B."/>
            <person name="Cai G."/>
            <person name="Cao Y."/>
            <person name="Huang H."/>
            <person name="Li Q."/>
            <person name="Ma Y."/>
            <person name="Chen S."/>
            <person name="Wang F."/>
            <person name="Jiang H."/>
        </authorList>
    </citation>
    <scope>FUNCTION</scope>
    <scope>DISRUPTION PHENOTYPE</scope>
</reference>
<reference key="6">
    <citation type="journal article" date="2024" name="Redox Biol.">
        <title>FBXL4 protects against HFpEF through Drp1-Mediated regulation of mitochondrial dynamics and the downstream SERCA2a.</title>
        <authorList>
            <person name="Abudureyimu M."/>
            <person name="Luo X."/>
            <person name="Jiang L."/>
            <person name="Jin X."/>
            <person name="Pan C."/>
            <person name="Yu W."/>
            <person name="Ge J."/>
            <person name="Zhang Y."/>
            <person name="Ren J."/>
        </authorList>
    </citation>
    <scope>FUNCTION</scope>
    <scope>SUBCELLULAR LOCATION</scope>
    <scope>INTERACTION WITH DRP1</scope>
</reference>